<proteinExistence type="inferred from homology"/>
<sequence length="205" mass="23425">MSAFITFEGPEGSGKTTVINEVYHRLVKDYDVIMTREPGGVPTGEEIRKIVLEGNDMDIRTEAMLFAASRREHLVLKVIPALKEGKVVLCDRYIDSSLAYQGYARGIGVEEVRALNEFAINGLYPDLTIYLNVSAEVGRERIIKNSRDQNRLDQEDLKFHEKVIEGYQEIIHNESQRFKSVNADQPLENVVEDTYQTIIKYLEKI</sequence>
<evidence type="ECO:0000255" key="1">
    <source>
        <dbReference type="HAMAP-Rule" id="MF_00165"/>
    </source>
</evidence>
<dbReference type="EC" id="2.7.4.9" evidence="1"/>
<dbReference type="EMBL" id="AJ938182">
    <property type="protein sequence ID" value="CAI80119.1"/>
    <property type="molecule type" value="Genomic_DNA"/>
</dbReference>
<dbReference type="RefSeq" id="WP_001272126.1">
    <property type="nucleotide sequence ID" value="NC_007622.1"/>
</dbReference>
<dbReference type="SMR" id="Q2YVW3"/>
<dbReference type="GeneID" id="98344796"/>
<dbReference type="KEGG" id="sab:SAB0431"/>
<dbReference type="HOGENOM" id="CLU_049131_0_2_9"/>
<dbReference type="GO" id="GO:0005829">
    <property type="term" value="C:cytosol"/>
    <property type="evidence" value="ECO:0007669"/>
    <property type="project" value="TreeGrafter"/>
</dbReference>
<dbReference type="GO" id="GO:0005524">
    <property type="term" value="F:ATP binding"/>
    <property type="evidence" value="ECO:0007669"/>
    <property type="project" value="UniProtKB-UniRule"/>
</dbReference>
<dbReference type="GO" id="GO:0004798">
    <property type="term" value="F:dTMP kinase activity"/>
    <property type="evidence" value="ECO:0007669"/>
    <property type="project" value="UniProtKB-UniRule"/>
</dbReference>
<dbReference type="GO" id="GO:0006233">
    <property type="term" value="P:dTDP biosynthetic process"/>
    <property type="evidence" value="ECO:0007669"/>
    <property type="project" value="InterPro"/>
</dbReference>
<dbReference type="GO" id="GO:0006235">
    <property type="term" value="P:dTTP biosynthetic process"/>
    <property type="evidence" value="ECO:0007669"/>
    <property type="project" value="UniProtKB-UniRule"/>
</dbReference>
<dbReference type="GO" id="GO:0006227">
    <property type="term" value="P:dUDP biosynthetic process"/>
    <property type="evidence" value="ECO:0007669"/>
    <property type="project" value="TreeGrafter"/>
</dbReference>
<dbReference type="CDD" id="cd01672">
    <property type="entry name" value="TMPK"/>
    <property type="match status" value="1"/>
</dbReference>
<dbReference type="FunFam" id="3.40.50.300:FF:000225">
    <property type="entry name" value="Thymidylate kinase"/>
    <property type="match status" value="1"/>
</dbReference>
<dbReference type="Gene3D" id="3.40.50.300">
    <property type="entry name" value="P-loop containing nucleotide triphosphate hydrolases"/>
    <property type="match status" value="1"/>
</dbReference>
<dbReference type="HAMAP" id="MF_00165">
    <property type="entry name" value="Thymidylate_kinase"/>
    <property type="match status" value="1"/>
</dbReference>
<dbReference type="InterPro" id="IPR027417">
    <property type="entry name" value="P-loop_NTPase"/>
</dbReference>
<dbReference type="InterPro" id="IPR039430">
    <property type="entry name" value="Thymidylate_kin-like_dom"/>
</dbReference>
<dbReference type="InterPro" id="IPR018095">
    <property type="entry name" value="Thymidylate_kin_CS"/>
</dbReference>
<dbReference type="InterPro" id="IPR018094">
    <property type="entry name" value="Thymidylate_kinase"/>
</dbReference>
<dbReference type="NCBIfam" id="TIGR00041">
    <property type="entry name" value="DTMP_kinase"/>
    <property type="match status" value="1"/>
</dbReference>
<dbReference type="PANTHER" id="PTHR10344">
    <property type="entry name" value="THYMIDYLATE KINASE"/>
    <property type="match status" value="1"/>
</dbReference>
<dbReference type="PANTHER" id="PTHR10344:SF4">
    <property type="entry name" value="UMP-CMP KINASE 2, MITOCHONDRIAL"/>
    <property type="match status" value="1"/>
</dbReference>
<dbReference type="Pfam" id="PF02223">
    <property type="entry name" value="Thymidylate_kin"/>
    <property type="match status" value="1"/>
</dbReference>
<dbReference type="SUPFAM" id="SSF52540">
    <property type="entry name" value="P-loop containing nucleoside triphosphate hydrolases"/>
    <property type="match status" value="1"/>
</dbReference>
<dbReference type="PROSITE" id="PS01331">
    <property type="entry name" value="THYMIDYLATE_KINASE"/>
    <property type="match status" value="1"/>
</dbReference>
<accession>Q2YVW3</accession>
<reference key="1">
    <citation type="journal article" date="2007" name="PLoS ONE">
        <title>Molecular correlates of host specialization in Staphylococcus aureus.</title>
        <authorList>
            <person name="Herron-Olson L."/>
            <person name="Fitzgerald J.R."/>
            <person name="Musser J.M."/>
            <person name="Kapur V."/>
        </authorList>
    </citation>
    <scope>NUCLEOTIDE SEQUENCE [LARGE SCALE GENOMIC DNA]</scope>
    <source>
        <strain>bovine RF122 / ET3-1</strain>
    </source>
</reference>
<organism>
    <name type="scientific">Staphylococcus aureus (strain bovine RF122 / ET3-1)</name>
    <dbReference type="NCBI Taxonomy" id="273036"/>
    <lineage>
        <taxon>Bacteria</taxon>
        <taxon>Bacillati</taxon>
        <taxon>Bacillota</taxon>
        <taxon>Bacilli</taxon>
        <taxon>Bacillales</taxon>
        <taxon>Staphylococcaceae</taxon>
        <taxon>Staphylococcus</taxon>
    </lineage>
</organism>
<protein>
    <recommendedName>
        <fullName evidence="1">Thymidylate kinase</fullName>
        <ecNumber evidence="1">2.7.4.9</ecNumber>
    </recommendedName>
    <alternativeName>
        <fullName evidence="1">dTMP kinase</fullName>
    </alternativeName>
</protein>
<feature type="chain" id="PRO_1000023289" description="Thymidylate kinase">
    <location>
        <begin position="1"/>
        <end position="205"/>
    </location>
</feature>
<feature type="binding site" evidence="1">
    <location>
        <begin position="9"/>
        <end position="16"/>
    </location>
    <ligand>
        <name>ATP</name>
        <dbReference type="ChEBI" id="CHEBI:30616"/>
    </ligand>
</feature>
<keyword id="KW-0067">ATP-binding</keyword>
<keyword id="KW-0418">Kinase</keyword>
<keyword id="KW-0545">Nucleotide biosynthesis</keyword>
<keyword id="KW-0547">Nucleotide-binding</keyword>
<keyword id="KW-0808">Transferase</keyword>
<gene>
    <name evidence="1" type="primary">tmk</name>
    <name type="ordered locus">SAB0431</name>
</gene>
<name>KTHY_STAAB</name>
<comment type="function">
    <text evidence="1">Phosphorylation of dTMP to form dTDP in both de novo and salvage pathways of dTTP synthesis.</text>
</comment>
<comment type="catalytic activity">
    <reaction evidence="1">
        <text>dTMP + ATP = dTDP + ADP</text>
        <dbReference type="Rhea" id="RHEA:13517"/>
        <dbReference type="ChEBI" id="CHEBI:30616"/>
        <dbReference type="ChEBI" id="CHEBI:58369"/>
        <dbReference type="ChEBI" id="CHEBI:63528"/>
        <dbReference type="ChEBI" id="CHEBI:456216"/>
        <dbReference type="EC" id="2.7.4.9"/>
    </reaction>
</comment>
<comment type="similarity">
    <text evidence="1">Belongs to the thymidylate kinase family.</text>
</comment>